<proteinExistence type="inferred from homology"/>
<name>GLGA_THEM4</name>
<organism>
    <name type="scientific">Thermosipho melanesiensis (strain DSM 12029 / CIP 104789 / BI429)</name>
    <dbReference type="NCBI Taxonomy" id="391009"/>
    <lineage>
        <taxon>Bacteria</taxon>
        <taxon>Thermotogati</taxon>
        <taxon>Thermotogota</taxon>
        <taxon>Thermotogae</taxon>
        <taxon>Thermotogales</taxon>
        <taxon>Fervidobacteriaceae</taxon>
        <taxon>Thermosipho</taxon>
    </lineage>
</organism>
<reference key="1">
    <citation type="submission" date="2007-05" db="EMBL/GenBank/DDBJ databases">
        <title>Complete sequence of Thermosipho melanesiensis BI429.</title>
        <authorList>
            <consortium name="US DOE Joint Genome Institute"/>
            <person name="Copeland A."/>
            <person name="Lucas S."/>
            <person name="Lapidus A."/>
            <person name="Barry K."/>
            <person name="Glavina del Rio T."/>
            <person name="Dalin E."/>
            <person name="Tice H."/>
            <person name="Pitluck S."/>
            <person name="Chertkov O."/>
            <person name="Brettin T."/>
            <person name="Bruce D."/>
            <person name="Detter J.C."/>
            <person name="Han C."/>
            <person name="Schmutz J."/>
            <person name="Larimer F."/>
            <person name="Land M."/>
            <person name="Hauser L."/>
            <person name="Kyrpides N."/>
            <person name="Mikhailova N."/>
            <person name="Nelson K."/>
            <person name="Gogarten J.P."/>
            <person name="Noll K."/>
            <person name="Richardson P."/>
        </authorList>
    </citation>
    <scope>NUCLEOTIDE SEQUENCE [LARGE SCALE GENOMIC DNA]</scope>
    <source>
        <strain>DSM 12029 / CIP 104789 / BI429</strain>
    </source>
</reference>
<gene>
    <name evidence="1" type="primary">glgA</name>
    <name type="ordered locus">Tmel_0077</name>
</gene>
<feature type="chain" id="PRO_1000014389" description="Glycogen synthase">
    <location>
        <begin position="1"/>
        <end position="481"/>
    </location>
</feature>
<feature type="binding site" evidence="1">
    <location>
        <position position="15"/>
    </location>
    <ligand>
        <name>ADP-alpha-D-glucose</name>
        <dbReference type="ChEBI" id="CHEBI:57498"/>
    </ligand>
</feature>
<sequence length="481" mass="55404">MKVALISYEVYPFAKVGGLADVVGALPKYLEKASVKPIVIMPKHKVVEKNARNLDKVMEKISIPYLKTDETFDIYKTIVPKTNVPIYFVANEYYFSAENVYEGPDLAEQAIYFSAAVLETLKVLDLQMDVLHVNDWQTSLIPVYLKTLYKEDEFYAKTVTLLTIHNLGYQGIFDSKYMEFSGLPNYLYNIDGIEFYGKINFLKGGILYSDIINTVSPTYANEIQTKEYGEKLDGVLRLRSADLYGVLNGIDYDEYNPETDKRIFVNYSLDNIDKKYENKVRLQKELGLPEDRRIPMIGMITRLVDQKGLDILSEVLRYIVNYDIQFVILGTGDEKYEEMFKKAQQEFPKNVSANVKFDINLAQKIYAASDMFLMPSRYEPCGLGQMYSLRYGTIPIVRYTGGLADTVLEYDENKMTGNGFGFVEYDSSKLLKAVARALDFYKNKKVHWKKLIDNAMKTDLSWERSAKEYVKLYNKAMSKRI</sequence>
<protein>
    <recommendedName>
        <fullName evidence="1">Glycogen synthase</fullName>
        <ecNumber evidence="1">2.4.1.21</ecNumber>
    </recommendedName>
    <alternativeName>
        <fullName evidence="1">Starch [bacterial glycogen] synthase</fullName>
    </alternativeName>
</protein>
<comment type="function">
    <text evidence="1">Synthesizes alpha-1,4-glucan chains using ADP-glucose.</text>
</comment>
<comment type="catalytic activity">
    <reaction evidence="1">
        <text>[(1-&gt;4)-alpha-D-glucosyl](n) + ADP-alpha-D-glucose = [(1-&gt;4)-alpha-D-glucosyl](n+1) + ADP + H(+)</text>
        <dbReference type="Rhea" id="RHEA:18189"/>
        <dbReference type="Rhea" id="RHEA-COMP:9584"/>
        <dbReference type="Rhea" id="RHEA-COMP:9587"/>
        <dbReference type="ChEBI" id="CHEBI:15378"/>
        <dbReference type="ChEBI" id="CHEBI:15444"/>
        <dbReference type="ChEBI" id="CHEBI:57498"/>
        <dbReference type="ChEBI" id="CHEBI:456216"/>
        <dbReference type="EC" id="2.4.1.21"/>
    </reaction>
</comment>
<comment type="pathway">
    <text evidence="1">Glycan biosynthesis; glycogen biosynthesis.</text>
</comment>
<comment type="similarity">
    <text evidence="1">Belongs to the glycosyltransferase 1 family. Bacterial/plant glycogen synthase subfamily.</text>
</comment>
<keyword id="KW-0320">Glycogen biosynthesis</keyword>
<keyword id="KW-0328">Glycosyltransferase</keyword>
<keyword id="KW-0808">Transferase</keyword>
<dbReference type="EC" id="2.4.1.21" evidence="1"/>
<dbReference type="EMBL" id="CP000716">
    <property type="protein sequence ID" value="ABR29954.1"/>
    <property type="molecule type" value="Genomic_DNA"/>
</dbReference>
<dbReference type="RefSeq" id="WP_012056316.1">
    <property type="nucleotide sequence ID" value="NC_009616.1"/>
</dbReference>
<dbReference type="SMR" id="A6LJ53"/>
<dbReference type="STRING" id="391009.Tmel_0077"/>
<dbReference type="CAZy" id="GT5">
    <property type="family name" value="Glycosyltransferase Family 5"/>
</dbReference>
<dbReference type="KEGG" id="tme:Tmel_0077"/>
<dbReference type="eggNOG" id="COG0297">
    <property type="taxonomic scope" value="Bacteria"/>
</dbReference>
<dbReference type="HOGENOM" id="CLU_009583_18_2_0"/>
<dbReference type="OrthoDB" id="9808590at2"/>
<dbReference type="UniPathway" id="UPA00164"/>
<dbReference type="Proteomes" id="UP000001110">
    <property type="component" value="Chromosome"/>
</dbReference>
<dbReference type="GO" id="GO:0009011">
    <property type="term" value="F:alpha-1,4-glucan glucosyltransferase (ADP-glucose donor) activity"/>
    <property type="evidence" value="ECO:0007669"/>
    <property type="project" value="UniProtKB-UniRule"/>
</dbReference>
<dbReference type="GO" id="GO:0004373">
    <property type="term" value="F:alpha-1,4-glucan glucosyltransferase (UDP-glucose donor) activity"/>
    <property type="evidence" value="ECO:0007669"/>
    <property type="project" value="InterPro"/>
</dbReference>
<dbReference type="GO" id="GO:0005978">
    <property type="term" value="P:glycogen biosynthetic process"/>
    <property type="evidence" value="ECO:0007669"/>
    <property type="project" value="UniProtKB-UniRule"/>
</dbReference>
<dbReference type="CDD" id="cd03791">
    <property type="entry name" value="GT5_Glycogen_synthase_DULL1-like"/>
    <property type="match status" value="1"/>
</dbReference>
<dbReference type="Gene3D" id="3.40.50.2000">
    <property type="entry name" value="Glycogen Phosphorylase B"/>
    <property type="match status" value="2"/>
</dbReference>
<dbReference type="HAMAP" id="MF_00484">
    <property type="entry name" value="Glycogen_synth"/>
    <property type="match status" value="1"/>
</dbReference>
<dbReference type="InterPro" id="IPR001296">
    <property type="entry name" value="Glyco_trans_1"/>
</dbReference>
<dbReference type="InterPro" id="IPR011835">
    <property type="entry name" value="GS/SS"/>
</dbReference>
<dbReference type="InterPro" id="IPR013534">
    <property type="entry name" value="Starch_synth_cat_dom"/>
</dbReference>
<dbReference type="NCBIfam" id="TIGR02095">
    <property type="entry name" value="glgA"/>
    <property type="match status" value="1"/>
</dbReference>
<dbReference type="PANTHER" id="PTHR45825:SF11">
    <property type="entry name" value="ALPHA AMYLASE DOMAIN-CONTAINING PROTEIN"/>
    <property type="match status" value="1"/>
</dbReference>
<dbReference type="PANTHER" id="PTHR45825">
    <property type="entry name" value="GRANULE-BOUND STARCH SYNTHASE 1, CHLOROPLASTIC/AMYLOPLASTIC"/>
    <property type="match status" value="1"/>
</dbReference>
<dbReference type="Pfam" id="PF08323">
    <property type="entry name" value="Glyco_transf_5"/>
    <property type="match status" value="1"/>
</dbReference>
<dbReference type="Pfam" id="PF00534">
    <property type="entry name" value="Glycos_transf_1"/>
    <property type="match status" value="1"/>
</dbReference>
<dbReference type="SUPFAM" id="SSF53756">
    <property type="entry name" value="UDP-Glycosyltransferase/glycogen phosphorylase"/>
    <property type="match status" value="1"/>
</dbReference>
<evidence type="ECO:0000255" key="1">
    <source>
        <dbReference type="HAMAP-Rule" id="MF_00484"/>
    </source>
</evidence>
<accession>A6LJ53</accession>